<reference key="1">
    <citation type="journal article" date="1990" name="Biochim. Biophys. Acta">
        <title>Elegantin and albolabrin purified peptides from viper venoms: homologies with the RGDS domain of fibrinogen and von Willebrand factor.</title>
        <authorList>
            <person name="Williams J."/>
            <person name="Rucinski B."/>
            <person name="Holt J."/>
            <person name="Niewiarowski S."/>
        </authorList>
    </citation>
    <scope>PROTEIN SEQUENCE</scope>
    <scope>SUBCELLULAR LOCATION</scope>
    <source>
        <tissue>Venom</tissue>
    </source>
</reference>
<reference key="2">
    <citation type="journal article" date="1991" name="Biochemistry">
        <title>Identification of the disulfide bond pattern in albolabrin, an RGD-containing peptide from the venom of Trimeresurus albolabris: significance for the expression of platelet aggregation inhibitory activity.</title>
        <authorList>
            <person name="Calvete J.J."/>
            <person name="Schaefer W."/>
            <person name="Soszka T."/>
            <person name="Lu W."/>
            <person name="Cook J.J."/>
            <person name="Jameson B.A."/>
            <person name="Niewiarowski S."/>
        </authorList>
    </citation>
    <scope>DISULFIDE BONDS</scope>
    <source>
        <tissue>Venom</tissue>
    </source>
</reference>
<reference key="3">
    <citation type="journal article" date="1993" name="Eur. J. Biochem.">
        <title>1H-NMR studies and secondary structure of the RGD-containing snake toxin, albolabrin.</title>
        <authorList>
            <person name="Jaseja M."/>
            <person name="Smith K.J."/>
            <person name="Lu X."/>
            <person name="Williams J.A."/>
            <person name="Trayer H."/>
            <person name="Trayer I.P."/>
            <person name="Hyde E.I."/>
        </authorList>
    </citation>
    <scope>STRUCTURE BY NMR</scope>
</reference>
<reference key="4">
    <citation type="journal article" date="1996" name="Int. J. Pept. Protein Res.">
        <title>Three-dimensional structure of the RGD-containing snake toxin albolabrin in solution, based on 1H NMR spectroscopy and simulated annealing calculations.</title>
        <authorList>
            <person name="Smith K.J."/>
            <person name="Jaseja M."/>
            <person name="Lu X."/>
            <person name="Williams J.A."/>
            <person name="Hyde E.I."/>
            <person name="Trayer I.P."/>
        </authorList>
    </citation>
    <scope>STRUCTURE BY NMR</scope>
</reference>
<comment type="function">
    <text>Inhibits fibrinogen interaction with platelet receptors. Acts by binding to alpha-IIb/beta-3 (ITGA2B/ITGB3) on the platelet surface and inhibits aggregation induced by ADP, thrombin, platelet-activating factor and collagen.</text>
</comment>
<comment type="subunit">
    <text evidence="1">Monomer (disintegrin).</text>
</comment>
<comment type="subcellular location">
    <subcellularLocation>
        <location evidence="4">Secreted</location>
    </subcellularLocation>
</comment>
<comment type="tissue specificity">
    <text evidence="7">Expressed by the venom gland.</text>
</comment>
<comment type="miscellaneous">
    <text>The disintegrin belongs to the medium disintegrin subfamily.</text>
</comment>
<comment type="similarity">
    <text evidence="5">Belongs to the venom metalloproteinase (M12B) family. P-II subfamily. P-IIa sub-subfamily.</text>
</comment>
<accession>P62384</accession>
<accession>P17496</accession>
<keyword id="KW-1217">Cell adhesion impairing toxin</keyword>
<keyword id="KW-0903">Direct protein sequencing</keyword>
<keyword id="KW-1015">Disulfide bond</keyword>
<keyword id="KW-1199">Hemostasis impairing toxin</keyword>
<keyword id="KW-1201">Platelet aggregation inhibiting toxin</keyword>
<keyword id="KW-0964">Secreted</keyword>
<keyword id="KW-0800">Toxin</keyword>
<feature type="chain" id="PRO_0000101809" description="Disintegrin albolabrin">
    <location>
        <begin position="1"/>
        <end position="73"/>
    </location>
</feature>
<feature type="domain" description="Disintegrin" evidence="2">
    <location>
        <begin position="1"/>
        <end position="73"/>
    </location>
</feature>
<feature type="short sequence motif" description="Cell attachment site">
    <location>
        <begin position="51"/>
        <end position="53"/>
    </location>
</feature>
<feature type="disulfide bond" evidence="6">
    <location>
        <begin position="6"/>
        <end position="15"/>
    </location>
</feature>
<feature type="disulfide bond" evidence="6">
    <location>
        <begin position="8"/>
        <end position="16"/>
    </location>
</feature>
<feature type="disulfide bond" evidence="6">
    <location>
        <begin position="21"/>
        <end position="35"/>
    </location>
</feature>
<feature type="disulfide bond" evidence="3">
    <location>
        <begin position="29"/>
        <end position="59"/>
    </location>
</feature>
<feature type="disulfide bond" evidence="6">
    <location>
        <begin position="34"/>
        <end position="38"/>
    </location>
</feature>
<feature type="disulfide bond" evidence="2 3">
    <location>
        <begin position="47"/>
        <end position="66"/>
    </location>
</feature>
<sequence>EAGEDCDCGSPANPCCDAATCKLLPGAQCGEGLCCDQCSFMKKGTICRRARGDDLDDYCNGISAGCPRNPLHA</sequence>
<protein>
    <recommendedName>
        <fullName>Disintegrin albolabrin</fullName>
    </recommendedName>
    <alternativeName>
        <fullName>Platelet aggregation activation inhibitor</fullName>
    </alternativeName>
</protein>
<proteinExistence type="evidence at protein level"/>
<organism>
    <name type="scientific">Trimeresurus albolabris</name>
    <name type="common">White-lipped pit viper</name>
    <name type="synonym">Cryptelytrops albolabris</name>
    <dbReference type="NCBI Taxonomy" id="8765"/>
    <lineage>
        <taxon>Eukaryota</taxon>
        <taxon>Metazoa</taxon>
        <taxon>Chordata</taxon>
        <taxon>Craniata</taxon>
        <taxon>Vertebrata</taxon>
        <taxon>Euteleostomi</taxon>
        <taxon>Lepidosauria</taxon>
        <taxon>Squamata</taxon>
        <taxon>Bifurcata</taxon>
        <taxon>Unidentata</taxon>
        <taxon>Episquamata</taxon>
        <taxon>Toxicofera</taxon>
        <taxon>Serpentes</taxon>
        <taxon>Colubroidea</taxon>
        <taxon>Viperidae</taxon>
        <taxon>Crotalinae</taxon>
        <taxon>Trimeresurus</taxon>
    </lineage>
</organism>
<evidence type="ECO:0000250" key="1"/>
<evidence type="ECO:0000255" key="2">
    <source>
        <dbReference type="PROSITE-ProRule" id="PRU00068"/>
    </source>
</evidence>
<evidence type="ECO:0000269" key="3">
    <source>
    </source>
</evidence>
<evidence type="ECO:0000269" key="4">
    <source>
    </source>
</evidence>
<evidence type="ECO:0000305" key="5"/>
<evidence type="ECO:0000305" key="6">
    <source>
    </source>
</evidence>
<evidence type="ECO:0000305" key="7">
    <source>
    </source>
</evidence>
<dbReference type="PIR" id="A23731">
    <property type="entry name" value="A23731"/>
</dbReference>
<dbReference type="SMR" id="P62384"/>
<dbReference type="ELM" id="P62384"/>
<dbReference type="GO" id="GO:0005576">
    <property type="term" value="C:extracellular region"/>
    <property type="evidence" value="ECO:0007669"/>
    <property type="project" value="UniProtKB-SubCell"/>
</dbReference>
<dbReference type="GO" id="GO:0090729">
    <property type="term" value="F:toxin activity"/>
    <property type="evidence" value="ECO:0007669"/>
    <property type="project" value="UniProtKB-KW"/>
</dbReference>
<dbReference type="FunFam" id="4.10.70.10:FF:000005">
    <property type="entry name" value="Zinc metalloproteinase/disintegrin"/>
    <property type="match status" value="1"/>
</dbReference>
<dbReference type="Gene3D" id="4.10.70.10">
    <property type="entry name" value="Disintegrin domain"/>
    <property type="match status" value="1"/>
</dbReference>
<dbReference type="InterPro" id="IPR018358">
    <property type="entry name" value="Disintegrin_CS"/>
</dbReference>
<dbReference type="InterPro" id="IPR001762">
    <property type="entry name" value="Disintegrin_dom"/>
</dbReference>
<dbReference type="InterPro" id="IPR036436">
    <property type="entry name" value="Disintegrin_dom_sf"/>
</dbReference>
<dbReference type="PANTHER" id="PTHR11905">
    <property type="entry name" value="ADAM A DISINTEGRIN AND METALLOPROTEASE DOMAIN"/>
    <property type="match status" value="1"/>
</dbReference>
<dbReference type="PANTHER" id="PTHR11905:SF159">
    <property type="entry name" value="ADAM METALLOPROTEASE"/>
    <property type="match status" value="1"/>
</dbReference>
<dbReference type="Pfam" id="PF00200">
    <property type="entry name" value="Disintegrin"/>
    <property type="match status" value="1"/>
</dbReference>
<dbReference type="PRINTS" id="PR00289">
    <property type="entry name" value="DISINTEGRIN"/>
</dbReference>
<dbReference type="SMART" id="SM00050">
    <property type="entry name" value="DISIN"/>
    <property type="match status" value="1"/>
</dbReference>
<dbReference type="SUPFAM" id="SSF57552">
    <property type="entry name" value="Blood coagulation inhibitor (disintegrin)"/>
    <property type="match status" value="1"/>
</dbReference>
<dbReference type="PROSITE" id="PS00427">
    <property type="entry name" value="DISINTEGRIN_1"/>
    <property type="match status" value="1"/>
</dbReference>
<dbReference type="PROSITE" id="PS50214">
    <property type="entry name" value="DISINTEGRIN_2"/>
    <property type="match status" value="1"/>
</dbReference>
<name>VM2G_TRIAB</name>